<name>FOLD_NEIG2</name>
<protein>
    <recommendedName>
        <fullName evidence="1">Bifunctional protein FolD</fullName>
    </recommendedName>
    <domain>
        <recommendedName>
            <fullName evidence="1">Methylenetetrahydrofolate dehydrogenase</fullName>
            <ecNumber evidence="1">1.5.1.5</ecNumber>
        </recommendedName>
    </domain>
    <domain>
        <recommendedName>
            <fullName evidence="1">Methenyltetrahydrofolate cyclohydrolase</fullName>
            <ecNumber evidence="1">3.5.4.9</ecNumber>
        </recommendedName>
    </domain>
</protein>
<organism>
    <name type="scientific">Neisseria gonorrhoeae (strain NCCP11945)</name>
    <dbReference type="NCBI Taxonomy" id="521006"/>
    <lineage>
        <taxon>Bacteria</taxon>
        <taxon>Pseudomonadati</taxon>
        <taxon>Pseudomonadota</taxon>
        <taxon>Betaproteobacteria</taxon>
        <taxon>Neisseriales</taxon>
        <taxon>Neisseriaceae</taxon>
        <taxon>Neisseria</taxon>
    </lineage>
</organism>
<feature type="chain" id="PRO_1000196797" description="Bifunctional protein FolD">
    <location>
        <begin position="1"/>
        <end position="284"/>
    </location>
</feature>
<feature type="binding site" evidence="1">
    <location>
        <begin position="166"/>
        <end position="168"/>
    </location>
    <ligand>
        <name>NADP(+)</name>
        <dbReference type="ChEBI" id="CHEBI:58349"/>
    </ligand>
</feature>
<feature type="binding site" evidence="1">
    <location>
        <position position="191"/>
    </location>
    <ligand>
        <name>NADP(+)</name>
        <dbReference type="ChEBI" id="CHEBI:58349"/>
    </ligand>
</feature>
<feature type="binding site" evidence="1">
    <location>
        <position position="232"/>
    </location>
    <ligand>
        <name>NADP(+)</name>
        <dbReference type="ChEBI" id="CHEBI:58349"/>
    </ligand>
</feature>
<sequence>MSAQLINGKEVSQKHLQAIAEAVAQRQQDNLHTPCLAVVLVGGDPAGAVYVRNKKTACQKCGIKSLSYELPESTSQEELLALVDRLNADSEVDGILVQLPLPKHLDSQAILERISPDKDVDGFHPYNVGRLAVKMPLMRPCTPKGVMTLLEAYGIDPKGKKAVVVGASNIVGRPQALELLLARATVTVCHSATENLADEVAAADILVVGVGIPNFVKGGWIKPGAVVIDVGINRLDDGSLCGDVEFETAKERAAMITPVPGGVGPMTIATLMENTLHAASLHDA</sequence>
<gene>
    <name evidence="1" type="primary">folD</name>
    <name type="ordered locus">NGK_2241</name>
</gene>
<proteinExistence type="inferred from homology"/>
<reference key="1">
    <citation type="journal article" date="2008" name="J. Bacteriol.">
        <title>Complete genome sequence of Neisseria gonorrhoeae NCCP11945.</title>
        <authorList>
            <person name="Chung G.T."/>
            <person name="Yoo J.S."/>
            <person name="Oh H.B."/>
            <person name="Lee Y.S."/>
            <person name="Cha S.H."/>
            <person name="Kim S.J."/>
            <person name="Yoo C.K."/>
        </authorList>
    </citation>
    <scope>NUCLEOTIDE SEQUENCE [LARGE SCALE GENOMIC DNA]</scope>
    <source>
        <strain>NCCP11945</strain>
    </source>
</reference>
<comment type="function">
    <text evidence="1">Catalyzes the oxidation of 5,10-methylenetetrahydrofolate to 5,10-methenyltetrahydrofolate and then the hydrolysis of 5,10-methenyltetrahydrofolate to 10-formyltetrahydrofolate.</text>
</comment>
<comment type="catalytic activity">
    <reaction evidence="1">
        <text>(6R)-5,10-methylene-5,6,7,8-tetrahydrofolate + NADP(+) = (6R)-5,10-methenyltetrahydrofolate + NADPH</text>
        <dbReference type="Rhea" id="RHEA:22812"/>
        <dbReference type="ChEBI" id="CHEBI:15636"/>
        <dbReference type="ChEBI" id="CHEBI:57455"/>
        <dbReference type="ChEBI" id="CHEBI:57783"/>
        <dbReference type="ChEBI" id="CHEBI:58349"/>
        <dbReference type="EC" id="1.5.1.5"/>
    </reaction>
</comment>
<comment type="catalytic activity">
    <reaction evidence="1">
        <text>(6R)-5,10-methenyltetrahydrofolate + H2O = (6R)-10-formyltetrahydrofolate + H(+)</text>
        <dbReference type="Rhea" id="RHEA:23700"/>
        <dbReference type="ChEBI" id="CHEBI:15377"/>
        <dbReference type="ChEBI" id="CHEBI:15378"/>
        <dbReference type="ChEBI" id="CHEBI:57455"/>
        <dbReference type="ChEBI" id="CHEBI:195366"/>
        <dbReference type="EC" id="3.5.4.9"/>
    </reaction>
</comment>
<comment type="pathway">
    <text evidence="1">One-carbon metabolism; tetrahydrofolate interconversion.</text>
</comment>
<comment type="subunit">
    <text evidence="1">Homodimer.</text>
</comment>
<comment type="similarity">
    <text evidence="1">Belongs to the tetrahydrofolate dehydrogenase/cyclohydrolase family.</text>
</comment>
<dbReference type="EC" id="1.5.1.5" evidence="1"/>
<dbReference type="EC" id="3.5.4.9" evidence="1"/>
<dbReference type="EMBL" id="CP001050">
    <property type="protein sequence ID" value="ACF30845.1"/>
    <property type="molecule type" value="Genomic_DNA"/>
</dbReference>
<dbReference type="RefSeq" id="WP_003686899.1">
    <property type="nucleotide sequence ID" value="NC_011035.1"/>
</dbReference>
<dbReference type="SMR" id="B4RQN5"/>
<dbReference type="GeneID" id="66754115"/>
<dbReference type="KEGG" id="ngk:NGK_2241"/>
<dbReference type="HOGENOM" id="CLU_034045_2_1_4"/>
<dbReference type="UniPathway" id="UPA00193"/>
<dbReference type="Proteomes" id="UP000002564">
    <property type="component" value="Chromosome"/>
</dbReference>
<dbReference type="GO" id="GO:0005829">
    <property type="term" value="C:cytosol"/>
    <property type="evidence" value="ECO:0007669"/>
    <property type="project" value="TreeGrafter"/>
</dbReference>
<dbReference type="GO" id="GO:0004477">
    <property type="term" value="F:methenyltetrahydrofolate cyclohydrolase activity"/>
    <property type="evidence" value="ECO:0007669"/>
    <property type="project" value="UniProtKB-UniRule"/>
</dbReference>
<dbReference type="GO" id="GO:0004488">
    <property type="term" value="F:methylenetetrahydrofolate dehydrogenase (NADP+) activity"/>
    <property type="evidence" value="ECO:0007669"/>
    <property type="project" value="UniProtKB-UniRule"/>
</dbReference>
<dbReference type="GO" id="GO:0000105">
    <property type="term" value="P:L-histidine biosynthetic process"/>
    <property type="evidence" value="ECO:0007669"/>
    <property type="project" value="UniProtKB-KW"/>
</dbReference>
<dbReference type="GO" id="GO:0009086">
    <property type="term" value="P:methionine biosynthetic process"/>
    <property type="evidence" value="ECO:0007669"/>
    <property type="project" value="UniProtKB-KW"/>
</dbReference>
<dbReference type="GO" id="GO:0006164">
    <property type="term" value="P:purine nucleotide biosynthetic process"/>
    <property type="evidence" value="ECO:0007669"/>
    <property type="project" value="UniProtKB-KW"/>
</dbReference>
<dbReference type="GO" id="GO:0035999">
    <property type="term" value="P:tetrahydrofolate interconversion"/>
    <property type="evidence" value="ECO:0007669"/>
    <property type="project" value="UniProtKB-UniRule"/>
</dbReference>
<dbReference type="CDD" id="cd01080">
    <property type="entry name" value="NAD_bind_m-THF_DH_Cyclohyd"/>
    <property type="match status" value="1"/>
</dbReference>
<dbReference type="FunFam" id="3.40.50.10860:FF:000001">
    <property type="entry name" value="Bifunctional protein FolD"/>
    <property type="match status" value="1"/>
</dbReference>
<dbReference type="FunFam" id="3.40.50.720:FF:000006">
    <property type="entry name" value="Bifunctional protein FolD"/>
    <property type="match status" value="1"/>
</dbReference>
<dbReference type="Gene3D" id="3.40.50.10860">
    <property type="entry name" value="Leucine Dehydrogenase, chain A, domain 1"/>
    <property type="match status" value="1"/>
</dbReference>
<dbReference type="Gene3D" id="3.40.50.720">
    <property type="entry name" value="NAD(P)-binding Rossmann-like Domain"/>
    <property type="match status" value="1"/>
</dbReference>
<dbReference type="HAMAP" id="MF_01576">
    <property type="entry name" value="THF_DHG_CYH"/>
    <property type="match status" value="1"/>
</dbReference>
<dbReference type="InterPro" id="IPR046346">
    <property type="entry name" value="Aminoacid_DH-like_N_sf"/>
</dbReference>
<dbReference type="InterPro" id="IPR036291">
    <property type="entry name" value="NAD(P)-bd_dom_sf"/>
</dbReference>
<dbReference type="InterPro" id="IPR000672">
    <property type="entry name" value="THF_DH/CycHdrlase"/>
</dbReference>
<dbReference type="InterPro" id="IPR020630">
    <property type="entry name" value="THF_DH/CycHdrlase_cat_dom"/>
</dbReference>
<dbReference type="InterPro" id="IPR020867">
    <property type="entry name" value="THF_DH/CycHdrlase_CS"/>
</dbReference>
<dbReference type="InterPro" id="IPR020631">
    <property type="entry name" value="THF_DH/CycHdrlase_NAD-bd_dom"/>
</dbReference>
<dbReference type="NCBIfam" id="NF008058">
    <property type="entry name" value="PRK10792.1"/>
    <property type="match status" value="1"/>
</dbReference>
<dbReference type="NCBIfam" id="NF010783">
    <property type="entry name" value="PRK14186.1"/>
    <property type="match status" value="1"/>
</dbReference>
<dbReference type="PANTHER" id="PTHR48099:SF5">
    <property type="entry name" value="C-1-TETRAHYDROFOLATE SYNTHASE, CYTOPLASMIC"/>
    <property type="match status" value="1"/>
</dbReference>
<dbReference type="PANTHER" id="PTHR48099">
    <property type="entry name" value="C-1-TETRAHYDROFOLATE SYNTHASE, CYTOPLASMIC-RELATED"/>
    <property type="match status" value="1"/>
</dbReference>
<dbReference type="Pfam" id="PF00763">
    <property type="entry name" value="THF_DHG_CYH"/>
    <property type="match status" value="1"/>
</dbReference>
<dbReference type="Pfam" id="PF02882">
    <property type="entry name" value="THF_DHG_CYH_C"/>
    <property type="match status" value="1"/>
</dbReference>
<dbReference type="PRINTS" id="PR00085">
    <property type="entry name" value="THFDHDRGNASE"/>
</dbReference>
<dbReference type="SUPFAM" id="SSF53223">
    <property type="entry name" value="Aminoacid dehydrogenase-like, N-terminal domain"/>
    <property type="match status" value="1"/>
</dbReference>
<dbReference type="SUPFAM" id="SSF51735">
    <property type="entry name" value="NAD(P)-binding Rossmann-fold domains"/>
    <property type="match status" value="1"/>
</dbReference>
<dbReference type="PROSITE" id="PS00766">
    <property type="entry name" value="THF_DHG_CYH_1"/>
    <property type="match status" value="1"/>
</dbReference>
<dbReference type="PROSITE" id="PS00767">
    <property type="entry name" value="THF_DHG_CYH_2"/>
    <property type="match status" value="1"/>
</dbReference>
<evidence type="ECO:0000255" key="1">
    <source>
        <dbReference type="HAMAP-Rule" id="MF_01576"/>
    </source>
</evidence>
<accession>B4RQN5</accession>
<keyword id="KW-0028">Amino-acid biosynthesis</keyword>
<keyword id="KW-0368">Histidine biosynthesis</keyword>
<keyword id="KW-0378">Hydrolase</keyword>
<keyword id="KW-0486">Methionine biosynthesis</keyword>
<keyword id="KW-0511">Multifunctional enzyme</keyword>
<keyword id="KW-0521">NADP</keyword>
<keyword id="KW-0554">One-carbon metabolism</keyword>
<keyword id="KW-0560">Oxidoreductase</keyword>
<keyword id="KW-0658">Purine biosynthesis</keyword>